<accession>A7MWL2</accession>
<protein>
    <recommendedName>
        <fullName evidence="1">Phospho-N-acetylmuramoyl-pentapeptide-transferase</fullName>
        <ecNumber evidence="1">2.7.8.13</ecNumber>
    </recommendedName>
    <alternativeName>
        <fullName evidence="1">UDP-MurNAc-pentapeptide phosphotransferase</fullName>
    </alternativeName>
</protein>
<organism>
    <name type="scientific">Vibrio campbellii (strain ATCC BAA-1116)</name>
    <dbReference type="NCBI Taxonomy" id="2902295"/>
    <lineage>
        <taxon>Bacteria</taxon>
        <taxon>Pseudomonadati</taxon>
        <taxon>Pseudomonadota</taxon>
        <taxon>Gammaproteobacteria</taxon>
        <taxon>Vibrionales</taxon>
        <taxon>Vibrionaceae</taxon>
        <taxon>Vibrio</taxon>
    </lineage>
</organism>
<proteinExistence type="inferred from homology"/>
<sequence>MIIWLAELLQPYLSFFRLFEYLSFRAILSVLTALGLSLWMGPIMIKRLQMLQIGQVVRNEGPESHFSKRGTPTMGGIMILAAISITILLWTDLSNPYVWAVLTVLLGYGAIGFVDDYRKVVRKNTDGLIARWKYFWQSLIAFVVAFALYAYGKDTAATQLVVPFFKDIMPQLGLMYIILTYFVIVGTSNAVNLTDGLDGLAIMPTVLVAAGFAVIAWATGNVNFSEYLHIPYLPHASELVVVCTAIVGAGLGFLWFNTYPAQVFMGDVGSLALGGALGTIAVLVRQELILVIMGGVFVMETLSVILQVGSYKLRGQRIFRMAPIHHHYELKGWPEPRVIVRFWIISMVLVLIGLATLKVR</sequence>
<feature type="chain" id="PRO_1000003086" description="Phospho-N-acetylmuramoyl-pentapeptide-transferase">
    <location>
        <begin position="1"/>
        <end position="360"/>
    </location>
</feature>
<feature type="transmembrane region" description="Helical" evidence="1">
    <location>
        <begin position="26"/>
        <end position="46"/>
    </location>
</feature>
<feature type="transmembrane region" description="Helical" evidence="1">
    <location>
        <begin position="70"/>
        <end position="90"/>
    </location>
</feature>
<feature type="transmembrane region" description="Helical" evidence="1">
    <location>
        <begin position="94"/>
        <end position="114"/>
    </location>
</feature>
<feature type="transmembrane region" description="Helical" evidence="1">
    <location>
        <begin position="132"/>
        <end position="152"/>
    </location>
</feature>
<feature type="transmembrane region" description="Helical" evidence="1">
    <location>
        <begin position="168"/>
        <end position="188"/>
    </location>
</feature>
<feature type="transmembrane region" description="Helical" evidence="1">
    <location>
        <begin position="199"/>
        <end position="219"/>
    </location>
</feature>
<feature type="transmembrane region" description="Helical" evidence="1">
    <location>
        <begin position="236"/>
        <end position="256"/>
    </location>
</feature>
<feature type="transmembrane region" description="Helical" evidence="1">
    <location>
        <begin position="263"/>
        <end position="283"/>
    </location>
</feature>
<feature type="transmembrane region" description="Helical" evidence="1">
    <location>
        <begin position="288"/>
        <end position="308"/>
    </location>
</feature>
<feature type="transmembrane region" description="Helical" evidence="1">
    <location>
        <begin position="338"/>
        <end position="358"/>
    </location>
</feature>
<keyword id="KW-0131">Cell cycle</keyword>
<keyword id="KW-0132">Cell division</keyword>
<keyword id="KW-0997">Cell inner membrane</keyword>
<keyword id="KW-1003">Cell membrane</keyword>
<keyword id="KW-0133">Cell shape</keyword>
<keyword id="KW-0961">Cell wall biogenesis/degradation</keyword>
<keyword id="KW-0460">Magnesium</keyword>
<keyword id="KW-0472">Membrane</keyword>
<keyword id="KW-0479">Metal-binding</keyword>
<keyword id="KW-0573">Peptidoglycan synthesis</keyword>
<keyword id="KW-0808">Transferase</keyword>
<keyword id="KW-0812">Transmembrane</keyword>
<keyword id="KW-1133">Transmembrane helix</keyword>
<dbReference type="EC" id="2.7.8.13" evidence="1"/>
<dbReference type="EMBL" id="CP000789">
    <property type="protein sequence ID" value="ABU69898.1"/>
    <property type="molecule type" value="Genomic_DNA"/>
</dbReference>
<dbReference type="RefSeq" id="WP_012126984.1">
    <property type="nucleotide sequence ID" value="NC_009783.1"/>
</dbReference>
<dbReference type="SMR" id="A7MWL2"/>
<dbReference type="KEGG" id="vha:VIBHAR_00899"/>
<dbReference type="PATRIC" id="fig|338187.25.peg.1719"/>
<dbReference type="UniPathway" id="UPA00219"/>
<dbReference type="Proteomes" id="UP000008152">
    <property type="component" value="Chromosome I"/>
</dbReference>
<dbReference type="GO" id="GO:0005886">
    <property type="term" value="C:plasma membrane"/>
    <property type="evidence" value="ECO:0007669"/>
    <property type="project" value="UniProtKB-SubCell"/>
</dbReference>
<dbReference type="GO" id="GO:0046872">
    <property type="term" value="F:metal ion binding"/>
    <property type="evidence" value="ECO:0007669"/>
    <property type="project" value="UniProtKB-KW"/>
</dbReference>
<dbReference type="GO" id="GO:0008963">
    <property type="term" value="F:phospho-N-acetylmuramoyl-pentapeptide-transferase activity"/>
    <property type="evidence" value="ECO:0007669"/>
    <property type="project" value="UniProtKB-UniRule"/>
</dbReference>
<dbReference type="GO" id="GO:0051992">
    <property type="term" value="F:UDP-N-acetylmuramoyl-L-alanyl-D-glutamyl-meso-2,6-diaminopimelyl-D-alanyl-D-alanine:undecaprenyl-phosphate transferase activity"/>
    <property type="evidence" value="ECO:0007669"/>
    <property type="project" value="RHEA"/>
</dbReference>
<dbReference type="GO" id="GO:0051301">
    <property type="term" value="P:cell division"/>
    <property type="evidence" value="ECO:0007669"/>
    <property type="project" value="UniProtKB-KW"/>
</dbReference>
<dbReference type="GO" id="GO:0071555">
    <property type="term" value="P:cell wall organization"/>
    <property type="evidence" value="ECO:0007669"/>
    <property type="project" value="UniProtKB-KW"/>
</dbReference>
<dbReference type="GO" id="GO:0009252">
    <property type="term" value="P:peptidoglycan biosynthetic process"/>
    <property type="evidence" value="ECO:0007669"/>
    <property type="project" value="UniProtKB-UniRule"/>
</dbReference>
<dbReference type="GO" id="GO:0008360">
    <property type="term" value="P:regulation of cell shape"/>
    <property type="evidence" value="ECO:0007669"/>
    <property type="project" value="UniProtKB-KW"/>
</dbReference>
<dbReference type="CDD" id="cd06852">
    <property type="entry name" value="GT_MraY"/>
    <property type="match status" value="1"/>
</dbReference>
<dbReference type="HAMAP" id="MF_00038">
    <property type="entry name" value="MraY"/>
    <property type="match status" value="1"/>
</dbReference>
<dbReference type="InterPro" id="IPR000715">
    <property type="entry name" value="Glycosyl_transferase_4"/>
</dbReference>
<dbReference type="InterPro" id="IPR003524">
    <property type="entry name" value="PNAcMuramoyl-5peptid_Trfase"/>
</dbReference>
<dbReference type="InterPro" id="IPR018480">
    <property type="entry name" value="PNAcMuramoyl-5peptid_Trfase_CS"/>
</dbReference>
<dbReference type="NCBIfam" id="TIGR00445">
    <property type="entry name" value="mraY"/>
    <property type="match status" value="1"/>
</dbReference>
<dbReference type="PANTHER" id="PTHR22926">
    <property type="entry name" value="PHOSPHO-N-ACETYLMURAMOYL-PENTAPEPTIDE-TRANSFERASE"/>
    <property type="match status" value="1"/>
</dbReference>
<dbReference type="PANTHER" id="PTHR22926:SF5">
    <property type="entry name" value="PHOSPHO-N-ACETYLMURAMOYL-PENTAPEPTIDE-TRANSFERASE HOMOLOG"/>
    <property type="match status" value="1"/>
</dbReference>
<dbReference type="Pfam" id="PF00953">
    <property type="entry name" value="Glycos_transf_4"/>
    <property type="match status" value="1"/>
</dbReference>
<dbReference type="Pfam" id="PF10555">
    <property type="entry name" value="MraY_sig1"/>
    <property type="match status" value="1"/>
</dbReference>
<dbReference type="PROSITE" id="PS01347">
    <property type="entry name" value="MRAY_1"/>
    <property type="match status" value="1"/>
</dbReference>
<dbReference type="PROSITE" id="PS01348">
    <property type="entry name" value="MRAY_2"/>
    <property type="match status" value="1"/>
</dbReference>
<comment type="function">
    <text evidence="1">Catalyzes the initial step of the lipid cycle reactions in the biosynthesis of the cell wall peptidoglycan: transfers peptidoglycan precursor phospho-MurNAc-pentapeptide from UDP-MurNAc-pentapeptide onto the lipid carrier undecaprenyl phosphate, yielding undecaprenyl-pyrophosphoryl-MurNAc-pentapeptide, known as lipid I.</text>
</comment>
<comment type="catalytic activity">
    <reaction evidence="1">
        <text>UDP-N-acetyl-alpha-D-muramoyl-L-alanyl-gamma-D-glutamyl-meso-2,6-diaminopimeloyl-D-alanyl-D-alanine + di-trans,octa-cis-undecaprenyl phosphate = di-trans,octa-cis-undecaprenyl diphospho-N-acetyl-alpha-D-muramoyl-L-alanyl-D-glutamyl-meso-2,6-diaminopimeloyl-D-alanyl-D-alanine + UMP</text>
        <dbReference type="Rhea" id="RHEA:28386"/>
        <dbReference type="ChEBI" id="CHEBI:57865"/>
        <dbReference type="ChEBI" id="CHEBI:60392"/>
        <dbReference type="ChEBI" id="CHEBI:61386"/>
        <dbReference type="ChEBI" id="CHEBI:61387"/>
        <dbReference type="EC" id="2.7.8.13"/>
    </reaction>
</comment>
<comment type="cofactor">
    <cofactor evidence="1">
        <name>Mg(2+)</name>
        <dbReference type="ChEBI" id="CHEBI:18420"/>
    </cofactor>
</comment>
<comment type="pathway">
    <text evidence="1">Cell wall biogenesis; peptidoglycan biosynthesis.</text>
</comment>
<comment type="subcellular location">
    <subcellularLocation>
        <location evidence="1">Cell inner membrane</location>
        <topology evidence="1">Multi-pass membrane protein</topology>
    </subcellularLocation>
</comment>
<comment type="similarity">
    <text evidence="1">Belongs to the glycosyltransferase 4 family. MraY subfamily.</text>
</comment>
<evidence type="ECO:0000255" key="1">
    <source>
        <dbReference type="HAMAP-Rule" id="MF_00038"/>
    </source>
</evidence>
<gene>
    <name evidence="1" type="primary">mraY</name>
    <name type="ordered locus">VIBHAR_00899</name>
</gene>
<reference key="1">
    <citation type="submission" date="2007-08" db="EMBL/GenBank/DDBJ databases">
        <authorList>
            <consortium name="The Vibrio harveyi Genome Sequencing Project"/>
            <person name="Bassler B."/>
            <person name="Clifton S.W."/>
            <person name="Fulton L."/>
            <person name="Delehaunty K."/>
            <person name="Fronick C."/>
            <person name="Harrison M."/>
            <person name="Markivic C."/>
            <person name="Fulton R."/>
            <person name="Tin-Wollam A.-M."/>
            <person name="Shah N."/>
            <person name="Pepin K."/>
            <person name="Nash W."/>
            <person name="Thiruvilangam P."/>
            <person name="Bhonagiri V."/>
            <person name="Waters C."/>
            <person name="Tu K.C."/>
            <person name="Irgon J."/>
            <person name="Wilson R.K."/>
        </authorList>
    </citation>
    <scope>NUCLEOTIDE SEQUENCE [LARGE SCALE GENOMIC DNA]</scope>
    <source>
        <strain>ATCC BAA-1116 / BB120</strain>
    </source>
</reference>
<name>MRAY_VIBC1</name>